<sequence length="242" mass="27494">MKILIPTAKEMNTDLPSIEAIPLKPESQTVLDALALYSASQLESFYKVSAEKAAEEFQNIQALKRQTAQHYPALKLFDGLMYRNIKRDKLTEAEQDYLENHVFITSALYGVVPALSPMAPHRLDFLMKLKVVGKTLKSHWKAVYDEALKKEEVIFSLLSSEFETVFSKEIRAKMVTFKFMEDRGGQLKIHSTISKKARGAFLTALIENQVQTVGEARRLNFAGFVYREDLSQPQGLVFVKEV</sequence>
<evidence type="ECO:0000255" key="1">
    <source>
        <dbReference type="HAMAP-Rule" id="MF_00652"/>
    </source>
</evidence>
<feature type="chain" id="PRO_1000200427" description="UPF0246 protein SP70585_1589">
    <location>
        <begin position="1"/>
        <end position="242"/>
    </location>
</feature>
<reference key="1">
    <citation type="journal article" date="2010" name="Genome Biol.">
        <title>Structure and dynamics of the pan-genome of Streptococcus pneumoniae and closely related species.</title>
        <authorList>
            <person name="Donati C."/>
            <person name="Hiller N.L."/>
            <person name="Tettelin H."/>
            <person name="Muzzi A."/>
            <person name="Croucher N.J."/>
            <person name="Angiuoli S.V."/>
            <person name="Oggioni M."/>
            <person name="Dunning Hotopp J.C."/>
            <person name="Hu F.Z."/>
            <person name="Riley D.R."/>
            <person name="Covacci A."/>
            <person name="Mitchell T.J."/>
            <person name="Bentley S.D."/>
            <person name="Kilian M."/>
            <person name="Ehrlich G.D."/>
            <person name="Rappuoli R."/>
            <person name="Moxon E.R."/>
            <person name="Masignani V."/>
        </authorList>
    </citation>
    <scope>NUCLEOTIDE SEQUENCE [LARGE SCALE GENOMIC DNA]</scope>
    <source>
        <strain>70585</strain>
    </source>
</reference>
<name>Y1589_STRP7</name>
<protein>
    <recommendedName>
        <fullName evidence="1">UPF0246 protein SP70585_1589</fullName>
    </recommendedName>
</protein>
<gene>
    <name type="ordered locus">SP70585_1589</name>
</gene>
<comment type="similarity">
    <text evidence="1">Belongs to the UPF0246 family.</text>
</comment>
<proteinExistence type="inferred from homology"/>
<organism>
    <name type="scientific">Streptococcus pneumoniae (strain 70585)</name>
    <dbReference type="NCBI Taxonomy" id="488221"/>
    <lineage>
        <taxon>Bacteria</taxon>
        <taxon>Bacillati</taxon>
        <taxon>Bacillota</taxon>
        <taxon>Bacilli</taxon>
        <taxon>Lactobacillales</taxon>
        <taxon>Streptococcaceae</taxon>
        <taxon>Streptococcus</taxon>
    </lineage>
</organism>
<accession>C1C8D9</accession>
<dbReference type="EMBL" id="CP000918">
    <property type="protein sequence ID" value="ACO16360.1"/>
    <property type="molecule type" value="Genomic_DNA"/>
</dbReference>
<dbReference type="RefSeq" id="WP_000697776.1">
    <property type="nucleotide sequence ID" value="NC_012468.1"/>
</dbReference>
<dbReference type="SMR" id="C1C8D9"/>
<dbReference type="KEGG" id="snm:SP70585_1589"/>
<dbReference type="HOGENOM" id="CLU_061989_2_1_9"/>
<dbReference type="Proteomes" id="UP000002211">
    <property type="component" value="Chromosome"/>
</dbReference>
<dbReference type="GO" id="GO:0005829">
    <property type="term" value="C:cytosol"/>
    <property type="evidence" value="ECO:0007669"/>
    <property type="project" value="TreeGrafter"/>
</dbReference>
<dbReference type="GO" id="GO:0033194">
    <property type="term" value="P:response to hydroperoxide"/>
    <property type="evidence" value="ECO:0007669"/>
    <property type="project" value="TreeGrafter"/>
</dbReference>
<dbReference type="HAMAP" id="MF_00652">
    <property type="entry name" value="UPF0246"/>
    <property type="match status" value="1"/>
</dbReference>
<dbReference type="InterPro" id="IPR005583">
    <property type="entry name" value="YaaA"/>
</dbReference>
<dbReference type="NCBIfam" id="NF002543">
    <property type="entry name" value="PRK02101.1-4"/>
    <property type="match status" value="1"/>
</dbReference>
<dbReference type="PANTHER" id="PTHR30283:SF4">
    <property type="entry name" value="PEROXIDE STRESS RESISTANCE PROTEIN YAAA"/>
    <property type="match status" value="1"/>
</dbReference>
<dbReference type="PANTHER" id="PTHR30283">
    <property type="entry name" value="PEROXIDE STRESS RESPONSE PROTEIN YAAA"/>
    <property type="match status" value="1"/>
</dbReference>
<dbReference type="Pfam" id="PF03883">
    <property type="entry name" value="H2O2_YaaD"/>
    <property type="match status" value="1"/>
</dbReference>